<name>MYF6_DANRE</name>
<sequence>MMDLFETNAYFFNDLRYLEGDHGTLDMPGVSPLYEGNDSPLSPGQDPVPSETGCESSGEEHVLAPPGLQAHCEGQCLMWACKICKRKSAPTDRRKAATLRERRRLKKINEAFDALKKKTVPNPNQRLPKVEILRSAINYIEKLQDLLHSLDEQEQSNDTDPYTYNLKENHVTPSEYHWKKTCQSWQENPDHSSSQMAGHREGAVLESSESSSLRRLSSIVDSISTEEPKARCPSQISEK</sequence>
<gene>
    <name type="primary">myf6</name>
    <name type="synonym">mrf4</name>
</gene>
<evidence type="ECO:0000250" key="1"/>
<evidence type="ECO:0000255" key="2">
    <source>
        <dbReference type="PROSITE-ProRule" id="PRU00981"/>
    </source>
</evidence>
<evidence type="ECO:0000256" key="3">
    <source>
        <dbReference type="SAM" id="MobiDB-lite"/>
    </source>
</evidence>
<comment type="function">
    <text evidence="1">Involved in muscle differentiation (myogenic factor). Induces fibroblasts to differentiate into myoblasts. Probable sequence specific DNA-binding protein (By similarity).</text>
</comment>
<comment type="subunit">
    <text evidence="1">Efficient DNA binding requires dimerization with another bHLH protein.</text>
</comment>
<comment type="subcellular location">
    <subcellularLocation>
        <location evidence="2">Nucleus</location>
    </subcellularLocation>
</comment>
<dbReference type="EMBL" id="AY335193">
    <property type="protein sequence ID" value="AAQ67704.1"/>
    <property type="molecule type" value="mRNA"/>
</dbReference>
<dbReference type="EMBL" id="BX537156">
    <property type="protein sequence ID" value="CAH68982.1"/>
    <property type="molecule type" value="Genomic_DNA"/>
</dbReference>
<dbReference type="RefSeq" id="NP_001003982.1">
    <property type="nucleotide sequence ID" value="NM_001003982.1"/>
</dbReference>
<dbReference type="SMR" id="Q6VNZ9"/>
<dbReference type="FunCoup" id="Q6VNZ9">
    <property type="interactions" value="349"/>
</dbReference>
<dbReference type="STRING" id="7955.ENSDARP00000040265"/>
<dbReference type="PaxDb" id="7955-ENSDARP00000040265"/>
<dbReference type="Ensembl" id="ENSDART00000040266">
    <property type="protein sequence ID" value="ENSDARP00000040265"/>
    <property type="gene ID" value="ENSDARG00000029830"/>
</dbReference>
<dbReference type="GeneID" id="404208"/>
<dbReference type="KEGG" id="dre:404208"/>
<dbReference type="AGR" id="ZFIN:ZDB-GENE-040309-2"/>
<dbReference type="CTD" id="4618"/>
<dbReference type="ZFIN" id="ZDB-GENE-040309-2">
    <property type="gene designation" value="myf6"/>
</dbReference>
<dbReference type="eggNOG" id="KOG3960">
    <property type="taxonomic scope" value="Eukaryota"/>
</dbReference>
<dbReference type="HOGENOM" id="CLU_100258_0_0_1"/>
<dbReference type="InParanoid" id="Q6VNZ9"/>
<dbReference type="OMA" id="CPSEWGN"/>
<dbReference type="OrthoDB" id="10049614at2759"/>
<dbReference type="PhylomeDB" id="Q6VNZ9"/>
<dbReference type="TreeFam" id="TF316344"/>
<dbReference type="Reactome" id="R-DRE-525793">
    <property type="pathway name" value="Myogenesis"/>
</dbReference>
<dbReference type="PRO" id="PR:Q6VNZ9"/>
<dbReference type="Proteomes" id="UP000000437">
    <property type="component" value="Chromosome 4"/>
</dbReference>
<dbReference type="Bgee" id="ENSDARG00000029830">
    <property type="expression patterns" value="Expressed in muscle tissue and 23 other cell types or tissues"/>
</dbReference>
<dbReference type="GO" id="GO:0005634">
    <property type="term" value="C:nucleus"/>
    <property type="evidence" value="ECO:0007669"/>
    <property type="project" value="UniProtKB-SubCell"/>
</dbReference>
<dbReference type="GO" id="GO:0000981">
    <property type="term" value="F:DNA-binding transcription factor activity, RNA polymerase II-specific"/>
    <property type="evidence" value="ECO:0000318"/>
    <property type="project" value="GO_Central"/>
</dbReference>
<dbReference type="GO" id="GO:0046983">
    <property type="term" value="F:protein dimerization activity"/>
    <property type="evidence" value="ECO:0007669"/>
    <property type="project" value="InterPro"/>
</dbReference>
<dbReference type="GO" id="GO:0000978">
    <property type="term" value="F:RNA polymerase II cis-regulatory region sequence-specific DNA binding"/>
    <property type="evidence" value="ECO:0000318"/>
    <property type="project" value="GO_Central"/>
</dbReference>
<dbReference type="GO" id="GO:0045663">
    <property type="term" value="P:positive regulation of myoblast differentiation"/>
    <property type="evidence" value="ECO:0000318"/>
    <property type="project" value="GO_Central"/>
</dbReference>
<dbReference type="GO" id="GO:0048743">
    <property type="term" value="P:positive regulation of skeletal muscle fiber development"/>
    <property type="evidence" value="ECO:0000318"/>
    <property type="project" value="GO_Central"/>
</dbReference>
<dbReference type="GO" id="GO:0006357">
    <property type="term" value="P:regulation of transcription by RNA polymerase II"/>
    <property type="evidence" value="ECO:0000318"/>
    <property type="project" value="GO_Central"/>
</dbReference>
<dbReference type="GO" id="GO:0035914">
    <property type="term" value="P:skeletal muscle cell differentiation"/>
    <property type="evidence" value="ECO:0000318"/>
    <property type="project" value="GO_Central"/>
</dbReference>
<dbReference type="GO" id="GO:0007519">
    <property type="term" value="P:skeletal muscle tissue development"/>
    <property type="evidence" value="ECO:0000315"/>
    <property type="project" value="ZFIN"/>
</dbReference>
<dbReference type="CDD" id="cd18934">
    <property type="entry name" value="bHLH_TS_MRF4_Myf6"/>
    <property type="match status" value="1"/>
</dbReference>
<dbReference type="FunFam" id="4.10.280.10:FF:000005">
    <property type="entry name" value="Myogenic factor"/>
    <property type="match status" value="1"/>
</dbReference>
<dbReference type="Gene3D" id="4.10.280.10">
    <property type="entry name" value="Helix-loop-helix DNA-binding domain"/>
    <property type="match status" value="1"/>
</dbReference>
<dbReference type="InterPro" id="IPR011598">
    <property type="entry name" value="bHLH_dom"/>
</dbReference>
<dbReference type="InterPro" id="IPR036638">
    <property type="entry name" value="HLH_DNA-bd_sf"/>
</dbReference>
<dbReference type="InterPro" id="IPR002546">
    <property type="entry name" value="MyoD_N"/>
</dbReference>
<dbReference type="InterPro" id="IPR039704">
    <property type="entry name" value="Myogenic_factor"/>
</dbReference>
<dbReference type="PANTHER" id="PTHR11534">
    <property type="entry name" value="MYOGENIC FACTOR"/>
    <property type="match status" value="1"/>
</dbReference>
<dbReference type="PANTHER" id="PTHR11534:SF4">
    <property type="entry name" value="MYOGENIC FACTOR 6"/>
    <property type="match status" value="1"/>
</dbReference>
<dbReference type="Pfam" id="PF01586">
    <property type="entry name" value="Basic"/>
    <property type="match status" value="1"/>
</dbReference>
<dbReference type="Pfam" id="PF00010">
    <property type="entry name" value="HLH"/>
    <property type="match status" value="1"/>
</dbReference>
<dbReference type="SMART" id="SM00520">
    <property type="entry name" value="BASIC"/>
    <property type="match status" value="1"/>
</dbReference>
<dbReference type="SMART" id="SM00353">
    <property type="entry name" value="HLH"/>
    <property type="match status" value="1"/>
</dbReference>
<dbReference type="SUPFAM" id="SSF47459">
    <property type="entry name" value="HLH, helix-loop-helix DNA-binding domain"/>
    <property type="match status" value="1"/>
</dbReference>
<dbReference type="PROSITE" id="PS50888">
    <property type="entry name" value="BHLH"/>
    <property type="match status" value="1"/>
</dbReference>
<feature type="chain" id="PRO_0000127356" description="Myogenic factor 6">
    <location>
        <begin position="1"/>
        <end position="239"/>
    </location>
</feature>
<feature type="domain" description="bHLH" evidence="2">
    <location>
        <begin position="92"/>
        <end position="143"/>
    </location>
</feature>
<feature type="region of interest" description="Disordered" evidence="3">
    <location>
        <begin position="28"/>
        <end position="59"/>
    </location>
</feature>
<feature type="region of interest" description="Disordered" evidence="3">
    <location>
        <begin position="182"/>
        <end position="239"/>
    </location>
</feature>
<feature type="compositionally biased region" description="Polar residues" evidence="3">
    <location>
        <begin position="182"/>
        <end position="196"/>
    </location>
</feature>
<feature type="compositionally biased region" description="Low complexity" evidence="3">
    <location>
        <begin position="204"/>
        <end position="223"/>
    </location>
</feature>
<protein>
    <recommendedName>
        <fullName>Myogenic factor 6</fullName>
        <shortName>Myf-6</shortName>
    </recommendedName>
    <alternativeName>
        <fullName>Muscle-specific regulatory factor 4</fullName>
    </alternativeName>
</protein>
<accession>Q6VNZ9</accession>
<proteinExistence type="evidence at transcript level"/>
<reference key="1">
    <citation type="submission" date="2003-07" db="EMBL/GenBank/DDBJ databases">
        <title>MRF4 and continued hedgehog signalling are required for normal muscle pioneer fibre maturation in zebrafish.</title>
        <authorList>
            <person name="Hinits Y."/>
            <person name="Osborn D.P.S."/>
            <person name="De Barreda C.M."/>
            <person name="Rigby P.W.J."/>
            <person name="Hughes S.M."/>
        </authorList>
    </citation>
    <scope>NUCLEOTIDE SEQUENCE [MRNA]</scope>
</reference>
<reference key="2">
    <citation type="journal article" date="2013" name="Nature">
        <title>The zebrafish reference genome sequence and its relationship to the human genome.</title>
        <authorList>
            <person name="Howe K."/>
            <person name="Clark M.D."/>
            <person name="Torroja C.F."/>
            <person name="Torrance J."/>
            <person name="Berthelot C."/>
            <person name="Muffato M."/>
            <person name="Collins J.E."/>
            <person name="Humphray S."/>
            <person name="McLaren K."/>
            <person name="Matthews L."/>
            <person name="McLaren S."/>
            <person name="Sealy I."/>
            <person name="Caccamo M."/>
            <person name="Churcher C."/>
            <person name="Scott C."/>
            <person name="Barrett J.C."/>
            <person name="Koch R."/>
            <person name="Rauch G.J."/>
            <person name="White S."/>
            <person name="Chow W."/>
            <person name="Kilian B."/>
            <person name="Quintais L.T."/>
            <person name="Guerra-Assuncao J.A."/>
            <person name="Zhou Y."/>
            <person name="Gu Y."/>
            <person name="Yen J."/>
            <person name="Vogel J.H."/>
            <person name="Eyre T."/>
            <person name="Redmond S."/>
            <person name="Banerjee R."/>
            <person name="Chi J."/>
            <person name="Fu B."/>
            <person name="Langley E."/>
            <person name="Maguire S.F."/>
            <person name="Laird G.K."/>
            <person name="Lloyd D."/>
            <person name="Kenyon E."/>
            <person name="Donaldson S."/>
            <person name="Sehra H."/>
            <person name="Almeida-King J."/>
            <person name="Loveland J."/>
            <person name="Trevanion S."/>
            <person name="Jones M."/>
            <person name="Quail M."/>
            <person name="Willey D."/>
            <person name="Hunt A."/>
            <person name="Burton J."/>
            <person name="Sims S."/>
            <person name="McLay K."/>
            <person name="Plumb B."/>
            <person name="Davis J."/>
            <person name="Clee C."/>
            <person name="Oliver K."/>
            <person name="Clark R."/>
            <person name="Riddle C."/>
            <person name="Elliot D."/>
            <person name="Threadgold G."/>
            <person name="Harden G."/>
            <person name="Ware D."/>
            <person name="Begum S."/>
            <person name="Mortimore B."/>
            <person name="Kerry G."/>
            <person name="Heath P."/>
            <person name="Phillimore B."/>
            <person name="Tracey A."/>
            <person name="Corby N."/>
            <person name="Dunn M."/>
            <person name="Johnson C."/>
            <person name="Wood J."/>
            <person name="Clark S."/>
            <person name="Pelan S."/>
            <person name="Griffiths G."/>
            <person name="Smith M."/>
            <person name="Glithero R."/>
            <person name="Howden P."/>
            <person name="Barker N."/>
            <person name="Lloyd C."/>
            <person name="Stevens C."/>
            <person name="Harley J."/>
            <person name="Holt K."/>
            <person name="Panagiotidis G."/>
            <person name="Lovell J."/>
            <person name="Beasley H."/>
            <person name="Henderson C."/>
            <person name="Gordon D."/>
            <person name="Auger K."/>
            <person name="Wright D."/>
            <person name="Collins J."/>
            <person name="Raisen C."/>
            <person name="Dyer L."/>
            <person name="Leung K."/>
            <person name="Robertson L."/>
            <person name="Ambridge K."/>
            <person name="Leongamornlert D."/>
            <person name="McGuire S."/>
            <person name="Gilderthorp R."/>
            <person name="Griffiths C."/>
            <person name="Manthravadi D."/>
            <person name="Nichol S."/>
            <person name="Barker G."/>
            <person name="Whitehead S."/>
            <person name="Kay M."/>
            <person name="Brown J."/>
            <person name="Murnane C."/>
            <person name="Gray E."/>
            <person name="Humphries M."/>
            <person name="Sycamore N."/>
            <person name="Barker D."/>
            <person name="Saunders D."/>
            <person name="Wallis J."/>
            <person name="Babbage A."/>
            <person name="Hammond S."/>
            <person name="Mashreghi-Mohammadi M."/>
            <person name="Barr L."/>
            <person name="Martin S."/>
            <person name="Wray P."/>
            <person name="Ellington A."/>
            <person name="Matthews N."/>
            <person name="Ellwood M."/>
            <person name="Woodmansey R."/>
            <person name="Clark G."/>
            <person name="Cooper J."/>
            <person name="Tromans A."/>
            <person name="Grafham D."/>
            <person name="Skuce C."/>
            <person name="Pandian R."/>
            <person name="Andrews R."/>
            <person name="Harrison E."/>
            <person name="Kimberley A."/>
            <person name="Garnett J."/>
            <person name="Fosker N."/>
            <person name="Hall R."/>
            <person name="Garner P."/>
            <person name="Kelly D."/>
            <person name="Bird C."/>
            <person name="Palmer S."/>
            <person name="Gehring I."/>
            <person name="Berger A."/>
            <person name="Dooley C.M."/>
            <person name="Ersan-Urun Z."/>
            <person name="Eser C."/>
            <person name="Geiger H."/>
            <person name="Geisler M."/>
            <person name="Karotki L."/>
            <person name="Kirn A."/>
            <person name="Konantz J."/>
            <person name="Konantz M."/>
            <person name="Oberlander M."/>
            <person name="Rudolph-Geiger S."/>
            <person name="Teucke M."/>
            <person name="Lanz C."/>
            <person name="Raddatz G."/>
            <person name="Osoegawa K."/>
            <person name="Zhu B."/>
            <person name="Rapp A."/>
            <person name="Widaa S."/>
            <person name="Langford C."/>
            <person name="Yang F."/>
            <person name="Schuster S.C."/>
            <person name="Carter N.P."/>
            <person name="Harrow J."/>
            <person name="Ning Z."/>
            <person name="Herrero J."/>
            <person name="Searle S.M."/>
            <person name="Enright A."/>
            <person name="Geisler R."/>
            <person name="Plasterk R.H."/>
            <person name="Lee C."/>
            <person name="Westerfield M."/>
            <person name="de Jong P.J."/>
            <person name="Zon L.I."/>
            <person name="Postlethwait J.H."/>
            <person name="Nusslein-Volhard C."/>
            <person name="Hubbard T.J."/>
            <person name="Roest Crollius H."/>
            <person name="Rogers J."/>
            <person name="Stemple D.L."/>
        </authorList>
    </citation>
    <scope>NUCLEOTIDE SEQUENCE [LARGE SCALE GENOMIC DNA]</scope>
    <source>
        <strain>Tuebingen</strain>
    </source>
</reference>
<keyword id="KW-0217">Developmental protein</keyword>
<keyword id="KW-0221">Differentiation</keyword>
<keyword id="KW-0238">DNA-binding</keyword>
<keyword id="KW-0517">Myogenesis</keyword>
<keyword id="KW-0539">Nucleus</keyword>
<keyword id="KW-1185">Reference proteome</keyword>
<organism>
    <name type="scientific">Danio rerio</name>
    <name type="common">Zebrafish</name>
    <name type="synonym">Brachydanio rerio</name>
    <dbReference type="NCBI Taxonomy" id="7955"/>
    <lineage>
        <taxon>Eukaryota</taxon>
        <taxon>Metazoa</taxon>
        <taxon>Chordata</taxon>
        <taxon>Craniata</taxon>
        <taxon>Vertebrata</taxon>
        <taxon>Euteleostomi</taxon>
        <taxon>Actinopterygii</taxon>
        <taxon>Neopterygii</taxon>
        <taxon>Teleostei</taxon>
        <taxon>Ostariophysi</taxon>
        <taxon>Cypriniformes</taxon>
        <taxon>Danionidae</taxon>
        <taxon>Danioninae</taxon>
        <taxon>Danio</taxon>
    </lineage>
</organism>